<evidence type="ECO:0000250" key="1"/>
<evidence type="ECO:0000255" key="2"/>
<evidence type="ECO:0000305" key="3"/>
<organism>
    <name type="scientific">Aspergillus clavatus (strain ATCC 1007 / CBS 513.65 / DSM 816 / NCTC 3887 / NRRL 1 / QM 1276 / 107)</name>
    <dbReference type="NCBI Taxonomy" id="344612"/>
    <lineage>
        <taxon>Eukaryota</taxon>
        <taxon>Fungi</taxon>
        <taxon>Dikarya</taxon>
        <taxon>Ascomycota</taxon>
        <taxon>Pezizomycotina</taxon>
        <taxon>Eurotiomycetes</taxon>
        <taxon>Eurotiomycetidae</taxon>
        <taxon>Eurotiales</taxon>
        <taxon>Aspergillaceae</taxon>
        <taxon>Aspergillus</taxon>
        <taxon>Aspergillus subgen. Fumigati</taxon>
    </lineage>
</organism>
<gene>
    <name type="primary">rot1</name>
    <name type="ORF">ACLA_007690</name>
</gene>
<reference key="1">
    <citation type="journal article" date="2008" name="PLoS Genet.">
        <title>Genomic islands in the pathogenic filamentous fungus Aspergillus fumigatus.</title>
        <authorList>
            <person name="Fedorova N.D."/>
            <person name="Khaldi N."/>
            <person name="Joardar V.S."/>
            <person name="Maiti R."/>
            <person name="Amedeo P."/>
            <person name="Anderson M.J."/>
            <person name="Crabtree J."/>
            <person name="Silva J.C."/>
            <person name="Badger J.H."/>
            <person name="Albarraq A."/>
            <person name="Angiuoli S."/>
            <person name="Bussey H."/>
            <person name="Bowyer P."/>
            <person name="Cotty P.J."/>
            <person name="Dyer P.S."/>
            <person name="Egan A."/>
            <person name="Galens K."/>
            <person name="Fraser-Liggett C.M."/>
            <person name="Haas B.J."/>
            <person name="Inman J.M."/>
            <person name="Kent R."/>
            <person name="Lemieux S."/>
            <person name="Malavazi I."/>
            <person name="Orvis J."/>
            <person name="Roemer T."/>
            <person name="Ronning C.M."/>
            <person name="Sundaram J.P."/>
            <person name="Sutton G."/>
            <person name="Turner G."/>
            <person name="Venter J.C."/>
            <person name="White O.R."/>
            <person name="Whitty B.R."/>
            <person name="Youngman P."/>
            <person name="Wolfe K.H."/>
            <person name="Goldman G.H."/>
            <person name="Wortman J.R."/>
            <person name="Jiang B."/>
            <person name="Denning D.W."/>
            <person name="Nierman W.C."/>
        </authorList>
    </citation>
    <scope>NUCLEOTIDE SEQUENCE [LARGE SCALE GENOMIC DNA]</scope>
    <source>
        <strain>ATCC 1007 / CBS 513.65 / DSM 816 / NCTC 3887 / NRRL 1 / QM 1276 / 107</strain>
    </source>
</reference>
<sequence>MIVEYFLFNLLVTIISASNAADLVGTWTTKSRSVVTGPAFYDPINDIFIEPNLTGMSYSFTEDGHFEEAYYRALANPTEPSCPKGIMQWQHGTYSVKSDGSIELTPIAVDGRQLVSDPCSKDVGMYTRYNQSETFNLFTVSTDAYHHVRRLDLASFDDAPMHPMYLVYKPPQMLPTTTLNPASLETGKSKRHVRRDIARSASVGGFIRSDDLINPDRWLWFGIFMTAMGGIAIIYS</sequence>
<name>ROT1_ASPCL</name>
<dbReference type="EMBL" id="DS027051">
    <property type="protein sequence ID" value="EAW12010.1"/>
    <property type="molecule type" value="Genomic_DNA"/>
</dbReference>
<dbReference type="RefSeq" id="XP_001273436.1">
    <property type="nucleotide sequence ID" value="XM_001273435.1"/>
</dbReference>
<dbReference type="STRING" id="344612.A1CDT3"/>
<dbReference type="GlyCosmos" id="A1CDT3">
    <property type="glycosylation" value="2 sites, No reported glycans"/>
</dbReference>
<dbReference type="EnsemblFungi" id="EAW12010">
    <property type="protein sequence ID" value="EAW12010"/>
    <property type="gene ID" value="ACLA_007690"/>
</dbReference>
<dbReference type="GeneID" id="4705407"/>
<dbReference type="KEGG" id="act:ACLA_007690"/>
<dbReference type="VEuPathDB" id="FungiDB:ACLA_007690"/>
<dbReference type="eggNOG" id="ENOG502QQTG">
    <property type="taxonomic scope" value="Eukaryota"/>
</dbReference>
<dbReference type="HOGENOM" id="CLU_071622_0_0_1"/>
<dbReference type="OMA" id="YKPPQML"/>
<dbReference type="OrthoDB" id="5327821at2759"/>
<dbReference type="Proteomes" id="UP000006701">
    <property type="component" value="Unassembled WGS sequence"/>
</dbReference>
<dbReference type="GO" id="GO:0005789">
    <property type="term" value="C:endoplasmic reticulum membrane"/>
    <property type="evidence" value="ECO:0007669"/>
    <property type="project" value="UniProtKB-SubCell"/>
</dbReference>
<dbReference type="GO" id="GO:0051082">
    <property type="term" value="F:unfolded protein binding"/>
    <property type="evidence" value="ECO:0007669"/>
    <property type="project" value="TreeGrafter"/>
</dbReference>
<dbReference type="GO" id="GO:0006458">
    <property type="term" value="P:'de novo' protein folding"/>
    <property type="evidence" value="ECO:0007669"/>
    <property type="project" value="InterPro"/>
</dbReference>
<dbReference type="InterPro" id="IPR019623">
    <property type="entry name" value="Rot1"/>
</dbReference>
<dbReference type="PANTHER" id="PTHR28090">
    <property type="entry name" value="PROTEIN ROT1"/>
    <property type="match status" value="1"/>
</dbReference>
<dbReference type="PANTHER" id="PTHR28090:SF1">
    <property type="entry name" value="PROTEIN ROT1"/>
    <property type="match status" value="1"/>
</dbReference>
<dbReference type="Pfam" id="PF10681">
    <property type="entry name" value="Rot1"/>
    <property type="match status" value="1"/>
</dbReference>
<dbReference type="PIRSF" id="PIRSF017290">
    <property type="entry name" value="ROT1_prd"/>
    <property type="match status" value="1"/>
</dbReference>
<accession>A1CDT3</accession>
<keyword id="KW-0256">Endoplasmic reticulum</keyword>
<keyword id="KW-0325">Glycoprotein</keyword>
<keyword id="KW-0472">Membrane</keyword>
<keyword id="KW-1185">Reference proteome</keyword>
<keyword id="KW-0732">Signal</keyword>
<keyword id="KW-0812">Transmembrane</keyword>
<keyword id="KW-1133">Transmembrane helix</keyword>
<feature type="signal peptide" evidence="2">
    <location>
        <begin position="1"/>
        <end position="20"/>
    </location>
</feature>
<feature type="chain" id="PRO_0000333403" description="Protein rot1">
    <location>
        <begin position="21"/>
        <end position="236"/>
    </location>
</feature>
<feature type="topological domain" description="Lumenal" evidence="2">
    <location>
        <begin position="21"/>
        <end position="214"/>
    </location>
</feature>
<feature type="transmembrane region" description="Helical" evidence="2">
    <location>
        <begin position="215"/>
        <end position="235"/>
    </location>
</feature>
<feature type="topological domain" description="Cytoplasmic" evidence="2">
    <location>
        <position position="236"/>
    </location>
</feature>
<feature type="glycosylation site" description="N-linked (GlcNAc...) asparagine" evidence="2">
    <location>
        <position position="52"/>
    </location>
</feature>
<feature type="glycosylation site" description="N-linked (GlcNAc...) asparagine" evidence="2">
    <location>
        <position position="130"/>
    </location>
</feature>
<protein>
    <recommendedName>
        <fullName>Protein rot1</fullName>
    </recommendedName>
</protein>
<comment type="function">
    <text evidence="1">Required for normal levels of the cell wall 1,6-beta-glucan. Involved in a protein folding machinery chaperoning proteins acting in various physiological processes including cell wall synthesis and lysis of autophagic bodies (By similarity).</text>
</comment>
<comment type="subcellular location">
    <subcellularLocation>
        <location evidence="1">Endoplasmic reticulum membrane</location>
        <topology evidence="1">Single-pass type I membrane protein</topology>
    </subcellularLocation>
</comment>
<comment type="similarity">
    <text evidence="3">Belongs to the ROT1 family.</text>
</comment>
<proteinExistence type="inferred from homology"/>